<sequence length="642" mass="72343">MPLVEGPLYRFCYGEYKNMVFDCNGTICKSGAHEQGRHMKFVKELKRTHYCGSLGVSQAGQKVVLMGWVDVRRDHGSLVFIDLRDREGIVQVVLDPNKAETASSKNLRGEFVLAVEGVVRARPDGMKNAKIKTGEVEVEAIRCEILNESAVPPFQVSDTNVNEMLRLKYRYLDLRSARLSSHLITRHKVAQLVRRFLSDNGFLEVETPILYKSTPEGARDYLVPSRVNPGHFYALPQSPQTLKQLLMISGYDRYFQIARCFRDEDLRADRQPEFSQIDMEMSYIDQEDIMEMNEKLLRTIWKEIKGIDVGAIPRMTYQEAMDRYGIDKPDTRFGVEIKDLKSIVTGSGFKVFDDVLARGGIVRGIAAPKGGSYSRGQLDKLTDMAKRAGAKGLVWIKSEADGTLSSSVSKFFSPEKLAEMFKACGGEAGDCALVVADDYDTACAALSTLRLHLGRELNLIDNSKYKFLWVVDFPLLEYSPDEKRWVARHHPFTSPKDEFAQDLVNNNEAAYGKMLAKAYDLVCNGYEMGGGSIRIYRNEIQQAMFRLLGMSEEETQHKFGFFLEALKYGTPPHGGIAWGMDRLVMLLCETDAIREVIAFPKTAKATDLMSDCPSEVNRDQLAEVGVRLSTLAEKHLEDLKKS</sequence>
<feature type="chain" id="PRO_0000110833" description="Aspartate--tRNA(Asp/Asn) ligase">
    <location>
        <begin position="1"/>
        <end position="642"/>
    </location>
</feature>
<feature type="region of interest" description="Aspartate" evidence="1">
    <location>
        <begin position="240"/>
        <end position="243"/>
    </location>
</feature>
<feature type="binding site" evidence="1">
    <location>
        <position position="216"/>
    </location>
    <ligand>
        <name>L-aspartate</name>
        <dbReference type="ChEBI" id="CHEBI:29991"/>
    </ligand>
</feature>
<feature type="binding site" evidence="1">
    <location>
        <begin position="262"/>
        <end position="264"/>
    </location>
    <ligand>
        <name>ATP</name>
        <dbReference type="ChEBI" id="CHEBI:30616"/>
    </ligand>
</feature>
<feature type="binding site" evidence="1">
    <location>
        <position position="262"/>
    </location>
    <ligand>
        <name>L-aspartate</name>
        <dbReference type="ChEBI" id="CHEBI:29991"/>
    </ligand>
</feature>
<feature type="binding site" evidence="1">
    <location>
        <position position="271"/>
    </location>
    <ligand>
        <name>ATP</name>
        <dbReference type="ChEBI" id="CHEBI:30616"/>
    </ligand>
</feature>
<feature type="binding site" evidence="1">
    <location>
        <position position="489"/>
    </location>
    <ligand>
        <name>L-aspartate</name>
        <dbReference type="ChEBI" id="CHEBI:29991"/>
    </ligand>
</feature>
<feature type="binding site" evidence="1">
    <location>
        <position position="527"/>
    </location>
    <ligand>
        <name>ATP</name>
        <dbReference type="ChEBI" id="CHEBI:30616"/>
    </ligand>
</feature>
<feature type="binding site" evidence="1">
    <location>
        <position position="534"/>
    </location>
    <ligand>
        <name>L-aspartate</name>
        <dbReference type="ChEBI" id="CHEBI:29991"/>
    </ligand>
</feature>
<feature type="binding site" evidence="1">
    <location>
        <begin position="579"/>
        <end position="582"/>
    </location>
    <ligand>
        <name>ATP</name>
        <dbReference type="ChEBI" id="CHEBI:30616"/>
    </ligand>
</feature>
<feature type="site" description="Important for tRNA non-discrimination" evidence="1">
    <location>
        <position position="75"/>
    </location>
</feature>
<feature type="site" description="Important for tRNA non-discrimination" evidence="1">
    <location>
        <position position="125"/>
    </location>
</feature>
<evidence type="ECO:0000255" key="1">
    <source>
        <dbReference type="HAMAP-Rule" id="MF_00044"/>
    </source>
</evidence>
<reference key="1">
    <citation type="journal article" date="2004" name="Science">
        <title>A predator unmasked: life cycle of Bdellovibrio bacteriovorus from a genomic perspective.</title>
        <authorList>
            <person name="Rendulic S."/>
            <person name="Jagtap P."/>
            <person name="Rosinus A."/>
            <person name="Eppinger M."/>
            <person name="Baar C."/>
            <person name="Lanz C."/>
            <person name="Keller H."/>
            <person name="Lambert C."/>
            <person name="Evans K.J."/>
            <person name="Goesmann A."/>
            <person name="Meyer F."/>
            <person name="Sockett R.E."/>
            <person name="Schuster S.C."/>
        </authorList>
    </citation>
    <scope>NUCLEOTIDE SEQUENCE [LARGE SCALE GENOMIC DNA]</scope>
    <source>
        <strain>ATCC 15356 / DSM 50701 / NCIMB 9529 / HD100</strain>
    </source>
</reference>
<name>SYDND_BDEBA</name>
<organism>
    <name type="scientific">Bdellovibrio bacteriovorus (strain ATCC 15356 / DSM 50701 / NCIMB 9529 / HD100)</name>
    <dbReference type="NCBI Taxonomy" id="264462"/>
    <lineage>
        <taxon>Bacteria</taxon>
        <taxon>Pseudomonadati</taxon>
        <taxon>Bdellovibrionota</taxon>
        <taxon>Bdellovibrionia</taxon>
        <taxon>Bdellovibrionales</taxon>
        <taxon>Pseudobdellovibrionaceae</taxon>
        <taxon>Bdellovibrio</taxon>
    </lineage>
</organism>
<gene>
    <name evidence="1" type="primary">aspS</name>
    <name type="ordered locus">Bd3311</name>
</gene>
<dbReference type="EC" id="6.1.1.23" evidence="1"/>
<dbReference type="EMBL" id="BX842655">
    <property type="protein sequence ID" value="CAE78121.1"/>
    <property type="molecule type" value="Genomic_DNA"/>
</dbReference>
<dbReference type="SMR" id="Q6MI59"/>
<dbReference type="STRING" id="264462.Bd3311"/>
<dbReference type="KEGG" id="bba:Bd3311"/>
<dbReference type="eggNOG" id="COG0173">
    <property type="taxonomic scope" value="Bacteria"/>
</dbReference>
<dbReference type="HOGENOM" id="CLU_014330_3_2_7"/>
<dbReference type="BRENDA" id="6.1.1.23">
    <property type="organism ID" value="799"/>
</dbReference>
<dbReference type="Proteomes" id="UP000008080">
    <property type="component" value="Chromosome"/>
</dbReference>
<dbReference type="GO" id="GO:0005737">
    <property type="term" value="C:cytoplasm"/>
    <property type="evidence" value="ECO:0007669"/>
    <property type="project" value="UniProtKB-SubCell"/>
</dbReference>
<dbReference type="GO" id="GO:0004815">
    <property type="term" value="F:aspartate-tRNA ligase activity"/>
    <property type="evidence" value="ECO:0007669"/>
    <property type="project" value="UniProtKB-UniRule"/>
</dbReference>
<dbReference type="GO" id="GO:0050560">
    <property type="term" value="F:aspartate-tRNA(Asn) ligase activity"/>
    <property type="evidence" value="ECO:0007669"/>
    <property type="project" value="UniProtKB-EC"/>
</dbReference>
<dbReference type="GO" id="GO:0005524">
    <property type="term" value="F:ATP binding"/>
    <property type="evidence" value="ECO:0007669"/>
    <property type="project" value="UniProtKB-UniRule"/>
</dbReference>
<dbReference type="GO" id="GO:0003676">
    <property type="term" value="F:nucleic acid binding"/>
    <property type="evidence" value="ECO:0007669"/>
    <property type="project" value="InterPro"/>
</dbReference>
<dbReference type="GO" id="GO:0006422">
    <property type="term" value="P:aspartyl-tRNA aminoacylation"/>
    <property type="evidence" value="ECO:0007669"/>
    <property type="project" value="UniProtKB-UniRule"/>
</dbReference>
<dbReference type="CDD" id="cd00777">
    <property type="entry name" value="AspRS_core"/>
    <property type="match status" value="1"/>
</dbReference>
<dbReference type="CDD" id="cd04317">
    <property type="entry name" value="EcAspRS_like_N"/>
    <property type="match status" value="1"/>
</dbReference>
<dbReference type="Gene3D" id="3.30.930.10">
    <property type="entry name" value="Bira Bifunctional Protein, Domain 2"/>
    <property type="match status" value="1"/>
</dbReference>
<dbReference type="Gene3D" id="3.30.1360.30">
    <property type="entry name" value="GAD-like domain"/>
    <property type="match status" value="1"/>
</dbReference>
<dbReference type="Gene3D" id="2.40.50.140">
    <property type="entry name" value="Nucleic acid-binding proteins"/>
    <property type="match status" value="1"/>
</dbReference>
<dbReference type="HAMAP" id="MF_00044">
    <property type="entry name" value="Asp_tRNA_synth_type1"/>
    <property type="match status" value="1"/>
</dbReference>
<dbReference type="InterPro" id="IPR004364">
    <property type="entry name" value="Aa-tRNA-synt_II"/>
</dbReference>
<dbReference type="InterPro" id="IPR006195">
    <property type="entry name" value="aa-tRNA-synth_II"/>
</dbReference>
<dbReference type="InterPro" id="IPR045864">
    <property type="entry name" value="aa-tRNA-synth_II/BPL/LPL"/>
</dbReference>
<dbReference type="InterPro" id="IPR004524">
    <property type="entry name" value="Asp-tRNA-ligase_1"/>
</dbReference>
<dbReference type="InterPro" id="IPR047089">
    <property type="entry name" value="Asp-tRNA-ligase_1_N"/>
</dbReference>
<dbReference type="InterPro" id="IPR002312">
    <property type="entry name" value="Asp/Asn-tRNA-synth_IIb"/>
</dbReference>
<dbReference type="InterPro" id="IPR047090">
    <property type="entry name" value="AspRS_core"/>
</dbReference>
<dbReference type="InterPro" id="IPR004115">
    <property type="entry name" value="GAD-like_sf"/>
</dbReference>
<dbReference type="InterPro" id="IPR029351">
    <property type="entry name" value="GAD_dom"/>
</dbReference>
<dbReference type="InterPro" id="IPR012340">
    <property type="entry name" value="NA-bd_OB-fold"/>
</dbReference>
<dbReference type="InterPro" id="IPR004365">
    <property type="entry name" value="NA-bd_OB_tRNA"/>
</dbReference>
<dbReference type="NCBIfam" id="TIGR00459">
    <property type="entry name" value="aspS_bact"/>
    <property type="match status" value="1"/>
</dbReference>
<dbReference type="NCBIfam" id="NF001750">
    <property type="entry name" value="PRK00476.1"/>
    <property type="match status" value="1"/>
</dbReference>
<dbReference type="PANTHER" id="PTHR22594:SF5">
    <property type="entry name" value="ASPARTATE--TRNA LIGASE, MITOCHONDRIAL"/>
    <property type="match status" value="1"/>
</dbReference>
<dbReference type="PANTHER" id="PTHR22594">
    <property type="entry name" value="ASPARTYL/LYSYL-TRNA SYNTHETASE"/>
    <property type="match status" value="1"/>
</dbReference>
<dbReference type="Pfam" id="PF02938">
    <property type="entry name" value="GAD"/>
    <property type="match status" value="1"/>
</dbReference>
<dbReference type="Pfam" id="PF00152">
    <property type="entry name" value="tRNA-synt_2"/>
    <property type="match status" value="1"/>
</dbReference>
<dbReference type="Pfam" id="PF01336">
    <property type="entry name" value="tRNA_anti-codon"/>
    <property type="match status" value="1"/>
</dbReference>
<dbReference type="PRINTS" id="PR01042">
    <property type="entry name" value="TRNASYNTHASP"/>
</dbReference>
<dbReference type="SUPFAM" id="SSF55681">
    <property type="entry name" value="Class II aaRS and biotin synthetases"/>
    <property type="match status" value="1"/>
</dbReference>
<dbReference type="SUPFAM" id="SSF55261">
    <property type="entry name" value="GAD domain-like"/>
    <property type="match status" value="1"/>
</dbReference>
<dbReference type="SUPFAM" id="SSF50249">
    <property type="entry name" value="Nucleic acid-binding proteins"/>
    <property type="match status" value="1"/>
</dbReference>
<dbReference type="PROSITE" id="PS50862">
    <property type="entry name" value="AA_TRNA_LIGASE_II"/>
    <property type="match status" value="1"/>
</dbReference>
<keyword id="KW-0030">Aminoacyl-tRNA synthetase</keyword>
<keyword id="KW-0067">ATP-binding</keyword>
<keyword id="KW-0963">Cytoplasm</keyword>
<keyword id="KW-0436">Ligase</keyword>
<keyword id="KW-0547">Nucleotide-binding</keyword>
<keyword id="KW-0648">Protein biosynthesis</keyword>
<keyword id="KW-1185">Reference proteome</keyword>
<accession>Q6MI59</accession>
<protein>
    <recommendedName>
        <fullName evidence="1">Aspartate--tRNA(Asp/Asn) ligase</fullName>
        <ecNumber evidence="1">6.1.1.23</ecNumber>
    </recommendedName>
    <alternativeName>
        <fullName evidence="1">Aspartyl-tRNA synthetase</fullName>
        <shortName evidence="1">AspRS</shortName>
    </alternativeName>
    <alternativeName>
        <fullName evidence="1">Non-discriminating aspartyl-tRNA synthetase</fullName>
        <shortName evidence="1">ND-AspRS</shortName>
    </alternativeName>
</protein>
<proteinExistence type="inferred from homology"/>
<comment type="function">
    <text evidence="1">Aspartyl-tRNA synthetase with relaxed tRNA specificity since it is able to aspartylate not only its cognate tRNA(Asp) but also tRNA(Asn). Reaction proceeds in two steps: L-aspartate is first activated by ATP to form Asp-AMP and then transferred to the acceptor end of tRNA(Asp/Asn).</text>
</comment>
<comment type="catalytic activity">
    <reaction evidence="1">
        <text>tRNA(Asx) + L-aspartate + ATP = L-aspartyl-tRNA(Asx) + AMP + diphosphate</text>
        <dbReference type="Rhea" id="RHEA:18349"/>
        <dbReference type="Rhea" id="RHEA-COMP:9710"/>
        <dbReference type="Rhea" id="RHEA-COMP:9711"/>
        <dbReference type="ChEBI" id="CHEBI:29991"/>
        <dbReference type="ChEBI" id="CHEBI:30616"/>
        <dbReference type="ChEBI" id="CHEBI:33019"/>
        <dbReference type="ChEBI" id="CHEBI:78442"/>
        <dbReference type="ChEBI" id="CHEBI:78516"/>
        <dbReference type="ChEBI" id="CHEBI:456215"/>
        <dbReference type="EC" id="6.1.1.23"/>
    </reaction>
</comment>
<comment type="subunit">
    <text evidence="1">Homodimer.</text>
</comment>
<comment type="subcellular location">
    <subcellularLocation>
        <location evidence="1">Cytoplasm</location>
    </subcellularLocation>
</comment>
<comment type="similarity">
    <text evidence="1">Belongs to the class-II aminoacyl-tRNA synthetase family. Type 1 subfamily.</text>
</comment>